<protein>
    <recommendedName>
        <fullName evidence="1">Homoserine O-succinyltransferase</fullName>
        <shortName evidence="1">HST</shortName>
        <ecNumber evidence="1">2.3.1.46</ecNumber>
    </recommendedName>
    <alternativeName>
        <fullName evidence="1">Homoserine transsuccinylase</fullName>
        <shortName evidence="1">HTS</shortName>
    </alternativeName>
</protein>
<dbReference type="EC" id="2.3.1.46" evidence="1"/>
<dbReference type="EMBL" id="CP000544">
    <property type="protein sequence ID" value="ABM61725.1"/>
    <property type="molecule type" value="Genomic_DNA"/>
</dbReference>
<dbReference type="RefSeq" id="WP_011813748.1">
    <property type="nucleotide sequence ID" value="NC_008789.1"/>
</dbReference>
<dbReference type="SMR" id="A1WVL3"/>
<dbReference type="STRING" id="349124.Hhal_0949"/>
<dbReference type="ESTHER" id="halhl-metx">
    <property type="family name" value="Homoserine_transacetylase"/>
</dbReference>
<dbReference type="KEGG" id="hha:Hhal_0949"/>
<dbReference type="eggNOG" id="COG2021">
    <property type="taxonomic scope" value="Bacteria"/>
</dbReference>
<dbReference type="HOGENOM" id="CLU_028760_1_2_6"/>
<dbReference type="OrthoDB" id="9800754at2"/>
<dbReference type="UniPathway" id="UPA00051">
    <property type="reaction ID" value="UER00075"/>
</dbReference>
<dbReference type="Proteomes" id="UP000000647">
    <property type="component" value="Chromosome"/>
</dbReference>
<dbReference type="GO" id="GO:0005737">
    <property type="term" value="C:cytoplasm"/>
    <property type="evidence" value="ECO:0007669"/>
    <property type="project" value="UniProtKB-SubCell"/>
</dbReference>
<dbReference type="GO" id="GO:0004414">
    <property type="term" value="F:homoserine O-acetyltransferase activity"/>
    <property type="evidence" value="ECO:0007669"/>
    <property type="project" value="TreeGrafter"/>
</dbReference>
<dbReference type="GO" id="GO:0008899">
    <property type="term" value="F:homoserine O-succinyltransferase activity"/>
    <property type="evidence" value="ECO:0007669"/>
    <property type="project" value="UniProtKB-UniRule"/>
</dbReference>
<dbReference type="GO" id="GO:0009092">
    <property type="term" value="P:homoserine metabolic process"/>
    <property type="evidence" value="ECO:0007669"/>
    <property type="project" value="TreeGrafter"/>
</dbReference>
<dbReference type="GO" id="GO:0009086">
    <property type="term" value="P:methionine biosynthetic process"/>
    <property type="evidence" value="ECO:0007669"/>
    <property type="project" value="UniProtKB-UniRule"/>
</dbReference>
<dbReference type="FunFam" id="1.10.1740.110:FF:000001">
    <property type="entry name" value="Homoserine O-acetyltransferase"/>
    <property type="match status" value="1"/>
</dbReference>
<dbReference type="Gene3D" id="1.10.1740.110">
    <property type="match status" value="1"/>
</dbReference>
<dbReference type="Gene3D" id="3.40.50.1820">
    <property type="entry name" value="alpha/beta hydrolase"/>
    <property type="match status" value="1"/>
</dbReference>
<dbReference type="HAMAP" id="MF_00296">
    <property type="entry name" value="MetX_acyltransf"/>
    <property type="match status" value="1"/>
</dbReference>
<dbReference type="InterPro" id="IPR000073">
    <property type="entry name" value="AB_hydrolase_1"/>
</dbReference>
<dbReference type="InterPro" id="IPR029058">
    <property type="entry name" value="AB_hydrolase_fold"/>
</dbReference>
<dbReference type="InterPro" id="IPR008220">
    <property type="entry name" value="HAT_MetX-like"/>
</dbReference>
<dbReference type="NCBIfam" id="TIGR01392">
    <property type="entry name" value="homoserO_Ac_trn"/>
    <property type="match status" value="1"/>
</dbReference>
<dbReference type="NCBIfam" id="NF001209">
    <property type="entry name" value="PRK00175.1"/>
    <property type="match status" value="1"/>
</dbReference>
<dbReference type="PANTHER" id="PTHR32268">
    <property type="entry name" value="HOMOSERINE O-ACETYLTRANSFERASE"/>
    <property type="match status" value="1"/>
</dbReference>
<dbReference type="PANTHER" id="PTHR32268:SF11">
    <property type="entry name" value="HOMOSERINE O-ACETYLTRANSFERASE"/>
    <property type="match status" value="1"/>
</dbReference>
<dbReference type="Pfam" id="PF00561">
    <property type="entry name" value="Abhydrolase_1"/>
    <property type="match status" value="1"/>
</dbReference>
<dbReference type="PIRSF" id="PIRSF000443">
    <property type="entry name" value="Homoser_Ac_trans"/>
    <property type="match status" value="1"/>
</dbReference>
<dbReference type="SUPFAM" id="SSF53474">
    <property type="entry name" value="alpha/beta-Hydrolases"/>
    <property type="match status" value="1"/>
</dbReference>
<accession>A1WVL3</accession>
<evidence type="ECO:0000255" key="1">
    <source>
        <dbReference type="HAMAP-Rule" id="MF_00296"/>
    </source>
</evidence>
<sequence>MVRSPPTDSVGLVTQHKATFEEPLPLVCGRELPRYELVYETYGELNREGTNAILVCHALSGNHHAAGYHSEHDRKPGWWETCIGPGKPLDTNRFFVVCSNNLGGCHGSTGPASINPETGKPYGDQFPIVTVRDWVRSQARLADELGIRQWAAVAGGSLGGMQAMQWAIDYPERLRHAIVIAAAPRLSAQNIGFNEVARQAIMSDPEFHGGRYYDYGVSPRRGLAVARMLGHITYLSDDAMRAKFGRDLRGDMSFDFEQVDFEVESYLRYQGQRFVQDFDANTYLLMTKALDYFDPAADHDDDFSAALAHIQCSTLLLSFSSDWRFAPARSREILRALLEHNKPVSYMEIEATQGHDAFLMPIQRYLEAFSAYMGNVAREVGA</sequence>
<name>METXS_HALHL</name>
<reference key="1">
    <citation type="submission" date="2006-12" db="EMBL/GenBank/DDBJ databases">
        <title>Complete sequence of Halorhodospira halophila SL1.</title>
        <authorList>
            <consortium name="US DOE Joint Genome Institute"/>
            <person name="Copeland A."/>
            <person name="Lucas S."/>
            <person name="Lapidus A."/>
            <person name="Barry K."/>
            <person name="Detter J.C."/>
            <person name="Glavina del Rio T."/>
            <person name="Hammon N."/>
            <person name="Israni S."/>
            <person name="Dalin E."/>
            <person name="Tice H."/>
            <person name="Pitluck S."/>
            <person name="Saunders E."/>
            <person name="Brettin T."/>
            <person name="Bruce D."/>
            <person name="Han C."/>
            <person name="Tapia R."/>
            <person name="Schmutz J."/>
            <person name="Larimer F."/>
            <person name="Land M."/>
            <person name="Hauser L."/>
            <person name="Kyrpides N."/>
            <person name="Mikhailova N."/>
            <person name="Hoff W."/>
            <person name="Richardson P."/>
        </authorList>
    </citation>
    <scope>NUCLEOTIDE SEQUENCE [LARGE SCALE GENOMIC DNA]</scope>
    <source>
        <strain>DSM 244 / SL1</strain>
    </source>
</reference>
<proteinExistence type="inferred from homology"/>
<feature type="chain" id="PRO_1000115225" description="Homoserine O-succinyltransferase">
    <location>
        <begin position="1"/>
        <end position="382"/>
    </location>
</feature>
<feature type="domain" description="AB hydrolase-1" evidence="1">
    <location>
        <begin position="51"/>
        <end position="359"/>
    </location>
</feature>
<feature type="active site" description="Nucleophile" evidence="1">
    <location>
        <position position="157"/>
    </location>
</feature>
<feature type="active site" evidence="1">
    <location>
        <position position="322"/>
    </location>
</feature>
<feature type="active site" evidence="1">
    <location>
        <position position="355"/>
    </location>
</feature>
<feature type="binding site" evidence="1">
    <location>
        <position position="227"/>
    </location>
    <ligand>
        <name>substrate</name>
    </ligand>
</feature>
<feature type="binding site" evidence="1">
    <location>
        <position position="356"/>
    </location>
    <ligand>
        <name>substrate</name>
    </ligand>
</feature>
<feature type="site" description="Important for acyl-CoA specificity" evidence="1">
    <location>
        <position position="324"/>
    </location>
</feature>
<organism>
    <name type="scientific">Halorhodospira halophila (strain DSM 244 / SL1)</name>
    <name type="common">Ectothiorhodospira halophila (strain DSM 244 / SL1)</name>
    <dbReference type="NCBI Taxonomy" id="349124"/>
    <lineage>
        <taxon>Bacteria</taxon>
        <taxon>Pseudomonadati</taxon>
        <taxon>Pseudomonadota</taxon>
        <taxon>Gammaproteobacteria</taxon>
        <taxon>Chromatiales</taxon>
        <taxon>Ectothiorhodospiraceae</taxon>
        <taxon>Halorhodospira</taxon>
    </lineage>
</organism>
<comment type="function">
    <text evidence="1">Transfers a succinyl group from succinyl-CoA to L-homoserine, forming succinyl-L-homoserine.</text>
</comment>
<comment type="catalytic activity">
    <reaction evidence="1">
        <text>L-homoserine + succinyl-CoA = O-succinyl-L-homoserine + CoA</text>
        <dbReference type="Rhea" id="RHEA:22008"/>
        <dbReference type="ChEBI" id="CHEBI:57287"/>
        <dbReference type="ChEBI" id="CHEBI:57292"/>
        <dbReference type="ChEBI" id="CHEBI:57476"/>
        <dbReference type="ChEBI" id="CHEBI:57661"/>
        <dbReference type="EC" id="2.3.1.46"/>
    </reaction>
</comment>
<comment type="pathway">
    <text evidence="1">Amino-acid biosynthesis; L-methionine biosynthesis via de novo pathway; O-succinyl-L-homoserine from L-homoserine: step 1/1.</text>
</comment>
<comment type="subunit">
    <text evidence="1">Homodimer.</text>
</comment>
<comment type="subcellular location">
    <subcellularLocation>
        <location evidence="1">Cytoplasm</location>
    </subcellularLocation>
</comment>
<comment type="similarity">
    <text evidence="1">Belongs to the AB hydrolase superfamily. MetX family.</text>
</comment>
<gene>
    <name evidence="1" type="primary">metXS</name>
    <name type="ordered locus">Hhal_0949</name>
</gene>
<keyword id="KW-0012">Acyltransferase</keyword>
<keyword id="KW-0028">Amino-acid biosynthesis</keyword>
<keyword id="KW-0963">Cytoplasm</keyword>
<keyword id="KW-0486">Methionine biosynthesis</keyword>
<keyword id="KW-1185">Reference proteome</keyword>
<keyword id="KW-0808">Transferase</keyword>